<gene>
    <name type="primary">IFIT5</name>
    <name type="synonym">ISG58</name>
    <name type="synonym">RI58</name>
</gene>
<keyword id="KW-0002">3D-structure</keyword>
<keyword id="KW-0025">Alternative splicing</keyword>
<keyword id="KW-0051">Antiviral defense</keyword>
<keyword id="KW-1003">Cell membrane</keyword>
<keyword id="KW-0966">Cell projection</keyword>
<keyword id="KW-0391">Immunity</keyword>
<keyword id="KW-0399">Innate immunity</keyword>
<keyword id="KW-0472">Membrane</keyword>
<keyword id="KW-1267">Proteomics identification</keyword>
<keyword id="KW-1185">Reference proteome</keyword>
<keyword id="KW-0677">Repeat</keyword>
<keyword id="KW-0694">RNA-binding</keyword>
<keyword id="KW-0802">TPR repeat</keyword>
<keyword id="KW-0820">tRNA-binding</keyword>
<dbReference type="EMBL" id="U34605">
    <property type="protein sequence ID" value="AAA84934.1"/>
    <property type="molecule type" value="mRNA"/>
</dbReference>
<dbReference type="EMBL" id="AK293346">
    <property type="protein sequence ID" value="BAG56862.1"/>
    <property type="molecule type" value="mRNA"/>
</dbReference>
<dbReference type="EMBL" id="AK312358">
    <property type="protein sequence ID" value="BAG35276.1"/>
    <property type="molecule type" value="mRNA"/>
</dbReference>
<dbReference type="EMBL" id="CR457031">
    <property type="protein sequence ID" value="CAG33312.1"/>
    <property type="molecule type" value="mRNA"/>
</dbReference>
<dbReference type="EMBL" id="AL353146">
    <property type="status" value="NOT_ANNOTATED_CDS"/>
    <property type="molecule type" value="Genomic_DNA"/>
</dbReference>
<dbReference type="EMBL" id="CH471066">
    <property type="protein sequence ID" value="EAW50135.1"/>
    <property type="molecule type" value="Genomic_DNA"/>
</dbReference>
<dbReference type="EMBL" id="BC025786">
    <property type="protein sequence ID" value="AAH25786.1"/>
    <property type="molecule type" value="mRNA"/>
</dbReference>
<dbReference type="CCDS" id="CCDS7403.1">
    <molecule id="Q13325-1"/>
</dbReference>
<dbReference type="PIR" id="G02058">
    <property type="entry name" value="G02058"/>
</dbReference>
<dbReference type="RefSeq" id="NP_036552.1">
    <molecule id="Q13325-1"/>
    <property type="nucleotide sequence ID" value="NM_012420.3"/>
</dbReference>
<dbReference type="PDB" id="3ZGQ">
    <property type="method" value="X-ray"/>
    <property type="resolution" value="2.20 A"/>
    <property type="chains" value="A=1-482"/>
</dbReference>
<dbReference type="PDB" id="4HOQ">
    <property type="method" value="X-ray"/>
    <property type="resolution" value="2.07 A"/>
    <property type="chains" value="A=1-482"/>
</dbReference>
<dbReference type="PDB" id="4HOR">
    <property type="method" value="X-ray"/>
    <property type="resolution" value="1.86 A"/>
    <property type="chains" value="A=1-482"/>
</dbReference>
<dbReference type="PDB" id="4HOS">
    <property type="method" value="X-ray"/>
    <property type="resolution" value="2.00 A"/>
    <property type="chains" value="A=1-482"/>
</dbReference>
<dbReference type="PDB" id="4HOT">
    <property type="method" value="X-ray"/>
    <property type="resolution" value="2.50 A"/>
    <property type="chains" value="A=1-482"/>
</dbReference>
<dbReference type="PDB" id="4J0U">
    <property type="method" value="X-ray"/>
    <property type="resolution" value="1.97 A"/>
    <property type="chains" value="A=1-482"/>
</dbReference>
<dbReference type="PDBsum" id="3ZGQ"/>
<dbReference type="PDBsum" id="4HOQ"/>
<dbReference type="PDBsum" id="4HOR"/>
<dbReference type="PDBsum" id="4HOS"/>
<dbReference type="PDBsum" id="4HOT"/>
<dbReference type="PDBsum" id="4J0U"/>
<dbReference type="SMR" id="Q13325"/>
<dbReference type="BioGRID" id="117289">
    <property type="interactions" value="113"/>
</dbReference>
<dbReference type="FunCoup" id="Q13325">
    <property type="interactions" value="159"/>
</dbReference>
<dbReference type="IntAct" id="Q13325">
    <property type="interactions" value="23"/>
</dbReference>
<dbReference type="MINT" id="Q13325"/>
<dbReference type="STRING" id="9606.ENSP00000360860"/>
<dbReference type="GlyGen" id="Q13325">
    <property type="glycosylation" value="1 site, 1 O-linked glycan (1 site)"/>
</dbReference>
<dbReference type="iPTMnet" id="Q13325"/>
<dbReference type="PhosphoSitePlus" id="Q13325"/>
<dbReference type="BioMuta" id="IFIT5"/>
<dbReference type="DMDM" id="6831571"/>
<dbReference type="jPOST" id="Q13325"/>
<dbReference type="MassIVE" id="Q13325"/>
<dbReference type="PaxDb" id="9606-ENSP00000360860"/>
<dbReference type="PeptideAtlas" id="Q13325"/>
<dbReference type="ProteomicsDB" id="3893"/>
<dbReference type="ProteomicsDB" id="59315">
    <molecule id="Q13325-1"/>
</dbReference>
<dbReference type="Pumba" id="Q13325"/>
<dbReference type="TopDownProteomics" id="Q13325-1">
    <molecule id="Q13325-1"/>
</dbReference>
<dbReference type="Antibodypedia" id="30272">
    <property type="antibodies" value="166 antibodies from 28 providers"/>
</dbReference>
<dbReference type="DNASU" id="24138"/>
<dbReference type="Ensembl" id="ENST00000371795.5">
    <molecule id="Q13325-1"/>
    <property type="protein sequence ID" value="ENSP00000360860.4"/>
    <property type="gene ID" value="ENSG00000152778.10"/>
</dbReference>
<dbReference type="Ensembl" id="ENST00000681348.1">
    <molecule id="Q13325-2"/>
    <property type="protein sequence ID" value="ENSP00000505706.1"/>
    <property type="gene ID" value="ENSG00000152778.10"/>
</dbReference>
<dbReference type="GeneID" id="24138"/>
<dbReference type="KEGG" id="hsa:24138"/>
<dbReference type="MANE-Select" id="ENST00000371795.5">
    <property type="protein sequence ID" value="ENSP00000360860.4"/>
    <property type="RefSeq nucleotide sequence ID" value="NM_012420.3"/>
    <property type="RefSeq protein sequence ID" value="NP_036552.1"/>
</dbReference>
<dbReference type="UCSC" id="uc010qnh.3">
    <molecule id="Q13325-1"/>
    <property type="organism name" value="human"/>
</dbReference>
<dbReference type="AGR" id="HGNC:13328"/>
<dbReference type="CTD" id="24138"/>
<dbReference type="DisGeNET" id="24138"/>
<dbReference type="GeneCards" id="IFIT5"/>
<dbReference type="HGNC" id="HGNC:13328">
    <property type="gene designation" value="IFIT5"/>
</dbReference>
<dbReference type="HPA" id="ENSG00000152778">
    <property type="expression patterns" value="Low tissue specificity"/>
</dbReference>
<dbReference type="MIM" id="616135">
    <property type="type" value="gene"/>
</dbReference>
<dbReference type="neXtProt" id="NX_Q13325"/>
<dbReference type="OpenTargets" id="ENSG00000152778"/>
<dbReference type="PharmGKB" id="PA134988392"/>
<dbReference type="VEuPathDB" id="HostDB:ENSG00000152778"/>
<dbReference type="eggNOG" id="KOG1124">
    <property type="taxonomic scope" value="Eukaryota"/>
</dbReference>
<dbReference type="GeneTree" id="ENSGT00950000182946"/>
<dbReference type="HOGENOM" id="CLU_043482_1_0_1"/>
<dbReference type="InParanoid" id="Q13325"/>
<dbReference type="OMA" id="YYYMERF"/>
<dbReference type="OrthoDB" id="10043504at2759"/>
<dbReference type="PAN-GO" id="Q13325">
    <property type="GO annotations" value="3 GO annotations based on evolutionary models"/>
</dbReference>
<dbReference type="PhylomeDB" id="Q13325"/>
<dbReference type="TreeFam" id="TF342671"/>
<dbReference type="PathwayCommons" id="Q13325"/>
<dbReference type="Reactome" id="R-HSA-909733">
    <property type="pathway name" value="Interferon alpha/beta signaling"/>
</dbReference>
<dbReference type="SignaLink" id="Q13325"/>
<dbReference type="BioGRID-ORCS" id="24138">
    <property type="hits" value="20 hits in 1146 CRISPR screens"/>
</dbReference>
<dbReference type="EvolutionaryTrace" id="Q13325"/>
<dbReference type="GenomeRNAi" id="24138"/>
<dbReference type="Pharos" id="Q13325">
    <property type="development level" value="Tbio"/>
</dbReference>
<dbReference type="PRO" id="PR:Q13325"/>
<dbReference type="Proteomes" id="UP000005640">
    <property type="component" value="Chromosome 10"/>
</dbReference>
<dbReference type="RNAct" id="Q13325">
    <property type="molecule type" value="protein"/>
</dbReference>
<dbReference type="Bgee" id="ENSG00000152778">
    <property type="expression patterns" value="Expressed in calcaneal tendon and 201 other cell types or tissues"/>
</dbReference>
<dbReference type="GO" id="GO:0015629">
    <property type="term" value="C:actin cytoskeleton"/>
    <property type="evidence" value="ECO:0000314"/>
    <property type="project" value="UniProtKB"/>
</dbReference>
<dbReference type="GO" id="GO:0045177">
    <property type="term" value="C:apical part of cell"/>
    <property type="evidence" value="ECO:0000314"/>
    <property type="project" value="UniProtKB"/>
</dbReference>
<dbReference type="GO" id="GO:0005829">
    <property type="term" value="C:cytosol"/>
    <property type="evidence" value="ECO:0000318"/>
    <property type="project" value="GO_Central"/>
</dbReference>
<dbReference type="GO" id="GO:0005886">
    <property type="term" value="C:plasma membrane"/>
    <property type="evidence" value="ECO:0000314"/>
    <property type="project" value="HPA"/>
</dbReference>
<dbReference type="GO" id="GO:0032587">
    <property type="term" value="C:ruffle membrane"/>
    <property type="evidence" value="ECO:0000314"/>
    <property type="project" value="UniProtKB"/>
</dbReference>
<dbReference type="GO" id="GO:0003690">
    <property type="term" value="F:double-stranded DNA binding"/>
    <property type="evidence" value="ECO:0000314"/>
    <property type="project" value="UniProtKB"/>
</dbReference>
<dbReference type="GO" id="GO:0008266">
    <property type="term" value="F:poly(U) RNA binding"/>
    <property type="evidence" value="ECO:0000314"/>
    <property type="project" value="UniProtKB"/>
</dbReference>
<dbReference type="GO" id="GO:0003723">
    <property type="term" value="F:RNA binding"/>
    <property type="evidence" value="ECO:0000314"/>
    <property type="project" value="UniProtKB"/>
</dbReference>
<dbReference type="GO" id="GO:0000339">
    <property type="term" value="F:RNA cap binding"/>
    <property type="evidence" value="ECO:0000314"/>
    <property type="project" value="UniProtKB"/>
</dbReference>
<dbReference type="GO" id="GO:0003727">
    <property type="term" value="F:single-stranded RNA binding"/>
    <property type="evidence" value="ECO:0000314"/>
    <property type="project" value="UniProtKB"/>
</dbReference>
<dbReference type="GO" id="GO:0000049">
    <property type="term" value="F:tRNA binding"/>
    <property type="evidence" value="ECO:0000314"/>
    <property type="project" value="UniProtKB"/>
</dbReference>
<dbReference type="GO" id="GO:0051607">
    <property type="term" value="P:defense response to virus"/>
    <property type="evidence" value="ECO:0000315"/>
    <property type="project" value="UniProtKB"/>
</dbReference>
<dbReference type="GO" id="GO:0045087">
    <property type="term" value="P:innate immune response"/>
    <property type="evidence" value="ECO:0007669"/>
    <property type="project" value="UniProtKB-KW"/>
</dbReference>
<dbReference type="GO" id="GO:0045071">
    <property type="term" value="P:negative regulation of viral genome replication"/>
    <property type="evidence" value="ECO:0000314"/>
    <property type="project" value="UniProtKB"/>
</dbReference>
<dbReference type="GO" id="GO:0043123">
    <property type="term" value="P:positive regulation of canonical NF-kappaB signal transduction"/>
    <property type="evidence" value="ECO:0000315"/>
    <property type="project" value="UniProtKB"/>
</dbReference>
<dbReference type="FunFam" id="1.25.40.10:FF:000036">
    <property type="entry name" value="interferon-induced protein with tetratricopeptide repeats 5"/>
    <property type="match status" value="1"/>
</dbReference>
<dbReference type="Gene3D" id="1.25.40.10">
    <property type="entry name" value="Tetratricopeptide repeat domain"/>
    <property type="match status" value="3"/>
</dbReference>
<dbReference type="InterPro" id="IPR011990">
    <property type="entry name" value="TPR-like_helical_dom_sf"/>
</dbReference>
<dbReference type="InterPro" id="IPR013105">
    <property type="entry name" value="TPR_2"/>
</dbReference>
<dbReference type="InterPro" id="IPR019734">
    <property type="entry name" value="TPR_rpt"/>
</dbReference>
<dbReference type="PANTHER" id="PTHR10271">
    <property type="entry name" value="INTERFERON-INDUCED PROTEIN WITH TETRATRICOPEPTIDE REPEATS"/>
    <property type="match status" value="1"/>
</dbReference>
<dbReference type="PANTHER" id="PTHR10271:SF28">
    <property type="entry name" value="INTERFERON-INDUCED PROTEIN WITH TETRATRICOPEPTIDE REPEATS 5"/>
    <property type="match status" value="1"/>
</dbReference>
<dbReference type="Pfam" id="PF13374">
    <property type="entry name" value="TPR_10"/>
    <property type="match status" value="1"/>
</dbReference>
<dbReference type="Pfam" id="PF13424">
    <property type="entry name" value="TPR_12"/>
    <property type="match status" value="1"/>
</dbReference>
<dbReference type="Pfam" id="PF07719">
    <property type="entry name" value="TPR_2"/>
    <property type="match status" value="1"/>
</dbReference>
<dbReference type="Pfam" id="PF13181">
    <property type="entry name" value="TPR_8"/>
    <property type="match status" value="1"/>
</dbReference>
<dbReference type="SMART" id="SM00028">
    <property type="entry name" value="TPR"/>
    <property type="match status" value="5"/>
</dbReference>
<dbReference type="SUPFAM" id="SSF48452">
    <property type="entry name" value="TPR-like"/>
    <property type="match status" value="1"/>
</dbReference>
<dbReference type="PROSITE" id="PS50005">
    <property type="entry name" value="TPR"/>
    <property type="match status" value="5"/>
</dbReference>
<dbReference type="PROSITE" id="PS50293">
    <property type="entry name" value="TPR_REGION"/>
    <property type="match status" value="3"/>
</dbReference>
<accession>Q13325</accession>
<accession>B2R5X9</accession>
<accession>B4DDV1</accession>
<accession>Q5T7I9</accession>
<accession>Q6IAX3</accession>
<name>IFIT5_HUMAN</name>
<reference key="1">
    <citation type="journal article" date="1997" name="Blood Cells Mol. Dis.">
        <title>A novel interferon-inducible gene expressed during myeloid differentiation.</title>
        <authorList>
            <person name="Niikura T."/>
            <person name="Hirata R."/>
            <person name="Weil S.C."/>
        </authorList>
    </citation>
    <scope>NUCLEOTIDE SEQUENCE [MRNA] (ISOFORM 1)</scope>
</reference>
<reference key="2">
    <citation type="journal article" date="2004" name="Nat. Genet.">
        <title>Complete sequencing and characterization of 21,243 full-length human cDNAs.</title>
        <authorList>
            <person name="Ota T."/>
            <person name="Suzuki Y."/>
            <person name="Nishikawa T."/>
            <person name="Otsuki T."/>
            <person name="Sugiyama T."/>
            <person name="Irie R."/>
            <person name="Wakamatsu A."/>
            <person name="Hayashi K."/>
            <person name="Sato H."/>
            <person name="Nagai K."/>
            <person name="Kimura K."/>
            <person name="Makita H."/>
            <person name="Sekine M."/>
            <person name="Obayashi M."/>
            <person name="Nishi T."/>
            <person name="Shibahara T."/>
            <person name="Tanaka T."/>
            <person name="Ishii S."/>
            <person name="Yamamoto J."/>
            <person name="Saito K."/>
            <person name="Kawai Y."/>
            <person name="Isono Y."/>
            <person name="Nakamura Y."/>
            <person name="Nagahari K."/>
            <person name="Murakami K."/>
            <person name="Yasuda T."/>
            <person name="Iwayanagi T."/>
            <person name="Wagatsuma M."/>
            <person name="Shiratori A."/>
            <person name="Sudo H."/>
            <person name="Hosoiri T."/>
            <person name="Kaku Y."/>
            <person name="Kodaira H."/>
            <person name="Kondo H."/>
            <person name="Sugawara M."/>
            <person name="Takahashi M."/>
            <person name="Kanda K."/>
            <person name="Yokoi T."/>
            <person name="Furuya T."/>
            <person name="Kikkawa E."/>
            <person name="Omura Y."/>
            <person name="Abe K."/>
            <person name="Kamihara K."/>
            <person name="Katsuta N."/>
            <person name="Sato K."/>
            <person name="Tanikawa M."/>
            <person name="Yamazaki M."/>
            <person name="Ninomiya K."/>
            <person name="Ishibashi T."/>
            <person name="Yamashita H."/>
            <person name="Murakawa K."/>
            <person name="Fujimori K."/>
            <person name="Tanai H."/>
            <person name="Kimata M."/>
            <person name="Watanabe M."/>
            <person name="Hiraoka S."/>
            <person name="Chiba Y."/>
            <person name="Ishida S."/>
            <person name="Ono Y."/>
            <person name="Takiguchi S."/>
            <person name="Watanabe S."/>
            <person name="Yosida M."/>
            <person name="Hotuta T."/>
            <person name="Kusano J."/>
            <person name="Kanehori K."/>
            <person name="Takahashi-Fujii A."/>
            <person name="Hara H."/>
            <person name="Tanase T.-O."/>
            <person name="Nomura Y."/>
            <person name="Togiya S."/>
            <person name="Komai F."/>
            <person name="Hara R."/>
            <person name="Takeuchi K."/>
            <person name="Arita M."/>
            <person name="Imose N."/>
            <person name="Musashino K."/>
            <person name="Yuuki H."/>
            <person name="Oshima A."/>
            <person name="Sasaki N."/>
            <person name="Aotsuka S."/>
            <person name="Yoshikawa Y."/>
            <person name="Matsunawa H."/>
            <person name="Ichihara T."/>
            <person name="Shiohata N."/>
            <person name="Sano S."/>
            <person name="Moriya S."/>
            <person name="Momiyama H."/>
            <person name="Satoh N."/>
            <person name="Takami S."/>
            <person name="Terashima Y."/>
            <person name="Suzuki O."/>
            <person name="Nakagawa S."/>
            <person name="Senoh A."/>
            <person name="Mizoguchi H."/>
            <person name="Goto Y."/>
            <person name="Shimizu F."/>
            <person name="Wakebe H."/>
            <person name="Hishigaki H."/>
            <person name="Watanabe T."/>
            <person name="Sugiyama A."/>
            <person name="Takemoto M."/>
            <person name="Kawakami B."/>
            <person name="Yamazaki M."/>
            <person name="Watanabe K."/>
            <person name="Kumagai A."/>
            <person name="Itakura S."/>
            <person name="Fukuzumi Y."/>
            <person name="Fujimori Y."/>
            <person name="Komiyama M."/>
            <person name="Tashiro H."/>
            <person name="Tanigami A."/>
            <person name="Fujiwara T."/>
            <person name="Ono T."/>
            <person name="Yamada K."/>
            <person name="Fujii Y."/>
            <person name="Ozaki K."/>
            <person name="Hirao M."/>
            <person name="Ohmori Y."/>
            <person name="Kawabata A."/>
            <person name="Hikiji T."/>
            <person name="Kobatake N."/>
            <person name="Inagaki H."/>
            <person name="Ikema Y."/>
            <person name="Okamoto S."/>
            <person name="Okitani R."/>
            <person name="Kawakami T."/>
            <person name="Noguchi S."/>
            <person name="Itoh T."/>
            <person name="Shigeta K."/>
            <person name="Senba T."/>
            <person name="Matsumura K."/>
            <person name="Nakajima Y."/>
            <person name="Mizuno T."/>
            <person name="Morinaga M."/>
            <person name="Sasaki M."/>
            <person name="Togashi T."/>
            <person name="Oyama M."/>
            <person name="Hata H."/>
            <person name="Watanabe M."/>
            <person name="Komatsu T."/>
            <person name="Mizushima-Sugano J."/>
            <person name="Satoh T."/>
            <person name="Shirai Y."/>
            <person name="Takahashi Y."/>
            <person name="Nakagawa K."/>
            <person name="Okumura K."/>
            <person name="Nagase T."/>
            <person name="Nomura N."/>
            <person name="Kikuchi H."/>
            <person name="Masuho Y."/>
            <person name="Yamashita R."/>
            <person name="Nakai K."/>
            <person name="Yada T."/>
            <person name="Nakamura Y."/>
            <person name="Ohara O."/>
            <person name="Isogai T."/>
            <person name="Sugano S."/>
        </authorList>
    </citation>
    <scope>NUCLEOTIDE SEQUENCE [LARGE SCALE MRNA] (ISOFORMS 1 AND 2)</scope>
    <source>
        <tissue>Amygdala</tissue>
    </source>
</reference>
<reference key="3">
    <citation type="submission" date="2005-07" db="EMBL/GenBank/DDBJ databases">
        <title>Cloning of human full open reading frames in Gateway(TM) system entry vector (pDONR201).</title>
        <authorList>
            <person name="Ebert L."/>
            <person name="Schick M."/>
            <person name="Neubert P."/>
            <person name="Schatten R."/>
            <person name="Henze S."/>
            <person name="Korn B."/>
        </authorList>
    </citation>
    <scope>NUCLEOTIDE SEQUENCE [LARGE SCALE MRNA] (ISOFORM 1)</scope>
</reference>
<reference key="4">
    <citation type="journal article" date="2004" name="Nature">
        <title>The DNA sequence and comparative analysis of human chromosome 10.</title>
        <authorList>
            <person name="Deloukas P."/>
            <person name="Earthrowl M.E."/>
            <person name="Grafham D.V."/>
            <person name="Rubenfield M."/>
            <person name="French L."/>
            <person name="Steward C.A."/>
            <person name="Sims S.K."/>
            <person name="Jones M.C."/>
            <person name="Searle S."/>
            <person name="Scott C."/>
            <person name="Howe K."/>
            <person name="Hunt S.E."/>
            <person name="Andrews T.D."/>
            <person name="Gilbert J.G.R."/>
            <person name="Swarbreck D."/>
            <person name="Ashurst J.L."/>
            <person name="Taylor A."/>
            <person name="Battles J."/>
            <person name="Bird C.P."/>
            <person name="Ainscough R."/>
            <person name="Almeida J.P."/>
            <person name="Ashwell R.I.S."/>
            <person name="Ambrose K.D."/>
            <person name="Babbage A.K."/>
            <person name="Bagguley C.L."/>
            <person name="Bailey J."/>
            <person name="Banerjee R."/>
            <person name="Bates K."/>
            <person name="Beasley H."/>
            <person name="Bray-Allen S."/>
            <person name="Brown A.J."/>
            <person name="Brown J.Y."/>
            <person name="Burford D.C."/>
            <person name="Burrill W."/>
            <person name="Burton J."/>
            <person name="Cahill P."/>
            <person name="Camire D."/>
            <person name="Carter N.P."/>
            <person name="Chapman J.C."/>
            <person name="Clark S.Y."/>
            <person name="Clarke G."/>
            <person name="Clee C.M."/>
            <person name="Clegg S."/>
            <person name="Corby N."/>
            <person name="Coulson A."/>
            <person name="Dhami P."/>
            <person name="Dutta I."/>
            <person name="Dunn M."/>
            <person name="Faulkner L."/>
            <person name="Frankish A."/>
            <person name="Frankland J.A."/>
            <person name="Garner P."/>
            <person name="Garnett J."/>
            <person name="Gribble S."/>
            <person name="Griffiths C."/>
            <person name="Grocock R."/>
            <person name="Gustafson E."/>
            <person name="Hammond S."/>
            <person name="Harley J.L."/>
            <person name="Hart E."/>
            <person name="Heath P.D."/>
            <person name="Ho T.P."/>
            <person name="Hopkins B."/>
            <person name="Horne J."/>
            <person name="Howden P.J."/>
            <person name="Huckle E."/>
            <person name="Hynds C."/>
            <person name="Johnson C."/>
            <person name="Johnson D."/>
            <person name="Kana A."/>
            <person name="Kay M."/>
            <person name="Kimberley A.M."/>
            <person name="Kershaw J.K."/>
            <person name="Kokkinaki M."/>
            <person name="Laird G.K."/>
            <person name="Lawlor S."/>
            <person name="Lee H.M."/>
            <person name="Leongamornlert D.A."/>
            <person name="Laird G."/>
            <person name="Lloyd C."/>
            <person name="Lloyd D.M."/>
            <person name="Loveland J."/>
            <person name="Lovell J."/>
            <person name="McLaren S."/>
            <person name="McLay K.E."/>
            <person name="McMurray A."/>
            <person name="Mashreghi-Mohammadi M."/>
            <person name="Matthews L."/>
            <person name="Milne S."/>
            <person name="Nickerson T."/>
            <person name="Nguyen M."/>
            <person name="Overton-Larty E."/>
            <person name="Palmer S.A."/>
            <person name="Pearce A.V."/>
            <person name="Peck A.I."/>
            <person name="Pelan S."/>
            <person name="Phillimore B."/>
            <person name="Porter K."/>
            <person name="Rice C.M."/>
            <person name="Rogosin A."/>
            <person name="Ross M.T."/>
            <person name="Sarafidou T."/>
            <person name="Sehra H.K."/>
            <person name="Shownkeen R."/>
            <person name="Skuce C.D."/>
            <person name="Smith M."/>
            <person name="Standring L."/>
            <person name="Sycamore N."/>
            <person name="Tester J."/>
            <person name="Thorpe A."/>
            <person name="Torcasso W."/>
            <person name="Tracey A."/>
            <person name="Tromans A."/>
            <person name="Tsolas J."/>
            <person name="Wall M."/>
            <person name="Walsh J."/>
            <person name="Wang H."/>
            <person name="Weinstock K."/>
            <person name="West A.P."/>
            <person name="Willey D.L."/>
            <person name="Whitehead S.L."/>
            <person name="Wilming L."/>
            <person name="Wray P.W."/>
            <person name="Young L."/>
            <person name="Chen Y."/>
            <person name="Lovering R.C."/>
            <person name="Moschonas N.K."/>
            <person name="Siebert R."/>
            <person name="Fechtel K."/>
            <person name="Bentley D."/>
            <person name="Durbin R.M."/>
            <person name="Hubbard T."/>
            <person name="Doucette-Stamm L."/>
            <person name="Beck S."/>
            <person name="Smith D.R."/>
            <person name="Rogers J."/>
        </authorList>
    </citation>
    <scope>NUCLEOTIDE SEQUENCE [LARGE SCALE GENOMIC DNA]</scope>
</reference>
<reference key="5">
    <citation type="submission" date="2005-09" db="EMBL/GenBank/DDBJ databases">
        <authorList>
            <person name="Mural R.J."/>
            <person name="Istrail S."/>
            <person name="Sutton G.G."/>
            <person name="Florea L."/>
            <person name="Halpern A.L."/>
            <person name="Mobarry C.M."/>
            <person name="Lippert R."/>
            <person name="Walenz B."/>
            <person name="Shatkay H."/>
            <person name="Dew I."/>
            <person name="Miller J.R."/>
            <person name="Flanigan M.J."/>
            <person name="Edwards N.J."/>
            <person name="Bolanos R."/>
            <person name="Fasulo D."/>
            <person name="Halldorsson B.V."/>
            <person name="Hannenhalli S."/>
            <person name="Turner R."/>
            <person name="Yooseph S."/>
            <person name="Lu F."/>
            <person name="Nusskern D.R."/>
            <person name="Shue B.C."/>
            <person name="Zheng X.H."/>
            <person name="Zhong F."/>
            <person name="Delcher A.L."/>
            <person name="Huson D.H."/>
            <person name="Kravitz S.A."/>
            <person name="Mouchard L."/>
            <person name="Reinert K."/>
            <person name="Remington K.A."/>
            <person name="Clark A.G."/>
            <person name="Waterman M.S."/>
            <person name="Eichler E.E."/>
            <person name="Adams M.D."/>
            <person name="Hunkapiller M.W."/>
            <person name="Myers E.W."/>
            <person name="Venter J.C."/>
        </authorList>
    </citation>
    <scope>NUCLEOTIDE SEQUENCE [LARGE SCALE GENOMIC DNA]</scope>
</reference>
<reference key="6">
    <citation type="journal article" date="2004" name="Genome Res.">
        <title>The status, quality, and expansion of the NIH full-length cDNA project: the Mammalian Gene Collection (MGC).</title>
        <authorList>
            <consortium name="The MGC Project Team"/>
        </authorList>
    </citation>
    <scope>NUCLEOTIDE SEQUENCE [LARGE SCALE MRNA] (ISOFORM 1)</scope>
    <source>
        <tissue>Pancreas</tissue>
        <tissue>Spleen</tissue>
    </source>
</reference>
<reference key="7">
    <citation type="journal article" date="2011" name="BMC Syst. Biol.">
        <title>Initial characterization of the human central proteome.</title>
        <authorList>
            <person name="Burkard T.R."/>
            <person name="Planyavsky M."/>
            <person name="Kaupe I."/>
            <person name="Breitwieser F.P."/>
            <person name="Buerckstuemmer T."/>
            <person name="Bennett K.L."/>
            <person name="Superti-Furga G."/>
            <person name="Colinge J."/>
        </authorList>
    </citation>
    <scope>IDENTIFICATION BY MASS SPECTROMETRY [LARGE SCALE ANALYSIS]</scope>
</reference>
<reference key="8">
    <citation type="journal article" date="2011" name="J. Interferon Cytokine Res.">
        <title>The ISG56/IFIT1 gene family.</title>
        <authorList>
            <person name="Fensterl V."/>
            <person name="Sen G.C."/>
        </authorList>
    </citation>
    <scope>REVIEW</scope>
</reference>
<reference key="9">
    <citation type="journal article" date="2011" name="Nat. Immunol.">
        <title>IFIT1 is an antiviral protein that recognizes 5'-triphosphate RNA.</title>
        <authorList>
            <person name="Pichlmair A."/>
            <person name="Lassnig C."/>
            <person name="Eberle C.A."/>
            <person name="Gorna M.W."/>
            <person name="Baumann C.L."/>
            <person name="Burkard T.R."/>
            <person name="Buerckstuemmer T."/>
            <person name="Stefanovic A."/>
            <person name="Krieger S."/>
            <person name="Bennett K.L."/>
            <person name="Ruelicke T."/>
            <person name="Weber F."/>
            <person name="Colinge J."/>
            <person name="Mueller M."/>
            <person name="Superti-Furga G."/>
        </authorList>
    </citation>
    <scope>RNA-BINDING</scope>
</reference>
<reference key="10">
    <citation type="journal article" date="2014" name="Proc. Natl. Acad. Sci. U.S.A.">
        <title>Broad and adaptable RNA structure recognition by the human interferon-induced tetratricopeptide repeat protein IFIT5.</title>
        <authorList>
            <person name="Katibah G.E."/>
            <person name="Qin Y."/>
            <person name="Sidote D.J."/>
            <person name="Yao J."/>
            <person name="Lambowitz A.M."/>
            <person name="Collins K."/>
        </authorList>
    </citation>
    <scope>FUNCTION</scope>
    <scope>RNA-BINDING</scope>
    <scope>MUTAGENESIS OF GLU-33; THR-37; GLN-41; LYS-48; LYS-150; TYR-156; ARG-186; TYR-250; ARG-253; TYR-254; GLN-288; LEU-291; ARG-307; ASP-334; PHE-339; LYS-415 AND LYS-426</scope>
</reference>
<reference key="11">
    <citation type="journal article" date="2015" name="Cell. Signal.">
        <title>IFIT5 positively regulates NF-kappaB signaling through synergizing the recruitment of IkappaB kinase (IKK) to TGF-beta-activated kinase 1 (TAK1).</title>
        <authorList>
            <person name="Zheng C."/>
            <person name="Zheng Z."/>
            <person name="Zhang Z."/>
            <person name="Meng J."/>
            <person name="Liu Y."/>
            <person name="Ke X."/>
            <person name="Hu Q."/>
            <person name="Wang H."/>
        </authorList>
    </citation>
    <scope>FUNCTION</scope>
    <scope>INTERACTION WITH MAP3K7; CHUK; IKBKB AND IKBKG</scope>
</reference>
<reference key="12">
    <citation type="journal article" date="2013" name="Cell Res.">
        <title>Crystal structure and nucleotide selectivity of human IFIT5/ISG58.</title>
        <authorList>
            <person name="Feng F."/>
            <person name="Yuan L."/>
            <person name="Wang Y.E."/>
            <person name="Crowley C."/>
            <person name="Lv Z."/>
            <person name="Li J."/>
            <person name="Liu Y."/>
            <person name="Cheng G."/>
            <person name="Zeng S."/>
            <person name="Liang H."/>
        </authorList>
    </citation>
    <scope>X-RAY CRYSTALLOGRAPHY (1.97 ANGSTROMS)</scope>
    <scope>FUNCTION</scope>
    <scope>RNA-BINDING</scope>
    <scope>DNA-BINDING</scope>
    <scope>SUBUNIT</scope>
    <scope>MUTAGENESIS OF 185-TYR-ARG-186; 253-ARG-TYR-254; LYS-257; PHE-284; ARG-294; 337-PHE--PHE-339; ARG-384; LYS-415 AND 422-LYS--LYS-426</scope>
</reference>
<reference key="13">
    <citation type="journal article" date="2013" name="Mol. Cell">
        <title>tRNA binding, structure, and localization of the human interferon-induced protein IFIT5.</title>
        <authorList>
            <person name="Katibah G.E."/>
            <person name="Lee H.J."/>
            <person name="Huizar J.P."/>
            <person name="Vogan J.M."/>
            <person name="Alber T."/>
            <person name="Collins K."/>
        </authorList>
    </citation>
    <scope>X-RAY CRYSTALLOGRAPHY (2.2 ANGSTROMS)</scope>
    <scope>FUNCTION</scope>
    <scope>RNA-BINDING</scope>
    <scope>SUBCELLULAR LOCATION</scope>
    <scope>SUBUNIT</scope>
    <scope>MUTAGENESIS OF LEU-291; LYS-302; ARG-307; LYS-309; 388-PHE-HIS-389; LYS-415; LYS-422 AND LYS-426</scope>
</reference>
<reference key="14">
    <citation type="journal article" date="2013" name="Nature">
        <title>Structural basis for viral 5'-PPP-RNA recognition by human IFIT proteins.</title>
        <authorList>
            <person name="Abbas Y.M."/>
            <person name="Pichlmair A."/>
            <person name="Gorna M.W."/>
            <person name="Superti-Furga G."/>
            <person name="Nagar B."/>
        </authorList>
    </citation>
    <scope>X-RAY CRYSTALLOGRAPHY (2.1 ANGSTROMS) IN COMPLEX WITH PPP-RNA</scope>
    <scope>FUNCTION</scope>
    <scope>RNA-BINDING</scope>
    <scope>MUTAGENESIS OF GLU-33; GLN-41; LYS-150; TYR-156; ARG-186; TYR-250; ARG-253; TYR-254; ARG-260; HIS-287 AND GLN-288</scope>
</reference>
<comment type="function">
    <text evidence="1 2 3 4 5">Interferon-induced RNA-binding protein involved in the human innate immune response. Has a broad and adaptable RNA structure recognition important for RNA recognition specificity in antiviral defense. Binds precursor and processed tRNAs as well as poly-U-tailed tRNA fragments (PubMed:23317505, PubMed:23774268, PubMed:25092312). Specifically binds single-stranded RNA bearing a 5'-triphosphate group (PPP-RNA), thereby acting as a sensor of viral single-stranded RNAs. Single-stranded PPP-RNAs, which lack 2'-O-methylation of the 5' cap and bear a 5'-triphosphate group instead, are specific from viruses, providing a molecular signature to distinguish between self and non-self mRNAs by the host during viral infection. Directly binds PPP-RNA in a non-sequence-specific manner (PubMed:23334420). Also recognizes and selectively binds AT-rich dsDNA (PubMed:23774268). Additionally, as a mediator in innate immunity, positively regulates IKK-NFKB signaling by sinergizing the recruitment of IKK to MAP3K7 (PubMed:26334375).</text>
</comment>
<comment type="subunit">
    <text evidence="1 2 3 5">Monomer (PubMed:23317505, PubMed:23334420, PubMed:23774268). Interacts with MAP3K7 and the components of the IKK core complex CHUK, IKBKB and IKBKG; the interaction synergizes the recruitment of IKK to MAP3K7 and enhances IKK phosphorylation (PubMed:26334375).</text>
</comment>
<comment type="subcellular location">
    <subcellularLocation>
        <location evidence="1">Cell projection</location>
        <location evidence="1">Ruffle membrane</location>
    </subcellularLocation>
    <text>Colocalized with RIGI at cell surface ruffles. Localizes to actin-rich protrusions from the apical cell surface.</text>
</comment>
<comment type="alternative products">
    <event type="alternative splicing"/>
    <isoform>
        <id>Q13325-1</id>
        <name>1</name>
        <sequence type="displayed"/>
    </isoform>
    <isoform>
        <id>Q13325-2</id>
        <name>2</name>
        <sequence type="described" ref="VSP_056412"/>
    </isoform>
</comment>
<comment type="induction">
    <text>By interferons (IFNs).</text>
</comment>
<comment type="domain">
    <text evidence="2">RNA recognition is mediated by a convoluted intramolecular fold of the TPR repeats (TPR eddy), which scaffolds unique additional helices that form an RNA binding cleft (PubMed:23317505, PubMed:23334420). Undergoes a conformational change upon RNA-binding: unliganded exists in a more open conformation, facilitating RNA entry (PubMed:23334420).</text>
</comment>
<comment type="similarity">
    <text evidence="7">Belongs to the IFIT family.</text>
</comment>
<sequence>MSEIRKDTLKAILLELECHFTWNLLKEDIDLFEVEDTIGQQLEFLTTKSRLALYNLLAYVKHLKGQNKDALECLEQAEEIIQQEHSDKEEVRSLVTWGNYAWVYYHMDQLEEAQKYTGKIGNVCKKLSSPSNYKLECPETDCEKGWALLKFGGKYYQKAKAAFEKALEVEPDNPEFNIGYAITVYRLDDSDREGSVKSFSLGPLRKAVTLNPDNSYIKVFLALKLQDVHAEAEGEKYIEEILDQISSQPYVLRYAAKFYRRKNSWNKALELLKKALEVTPTSSFLHHQMGLCYRAQMIQIKKATHNRPKGKDKLKVDELISSAIFHFKAAMERDSMFAFAYTDLANMYAEGGQYSNAEDIFRKALRLENITDDHKHQIHYHYGRFQEFHRKSENTAIHHYLEALKVKDRSPLRTKLTSALKKLSTKRLCHNALDVQSLSALGFVYKLEGEKRQAAEYYEKAQKIDPENAEFLTALCELRLSI</sequence>
<protein>
    <recommendedName>
        <fullName>Interferon-induced protein with tetratricopeptide repeats 5</fullName>
        <shortName>IFIT-5</shortName>
    </recommendedName>
    <alternativeName>
        <fullName>Interferon-induced 58 kDa protein</fullName>
    </alternativeName>
    <alternativeName>
        <fullName>Retinoic acid- and interferon-inducible 58 kDa protein</fullName>
        <shortName>P58</shortName>
    </alternativeName>
</protein>
<proteinExistence type="evidence at protein level"/>
<organism>
    <name type="scientific">Homo sapiens</name>
    <name type="common">Human</name>
    <dbReference type="NCBI Taxonomy" id="9606"/>
    <lineage>
        <taxon>Eukaryota</taxon>
        <taxon>Metazoa</taxon>
        <taxon>Chordata</taxon>
        <taxon>Craniata</taxon>
        <taxon>Vertebrata</taxon>
        <taxon>Euteleostomi</taxon>
        <taxon>Mammalia</taxon>
        <taxon>Eutheria</taxon>
        <taxon>Euarchontoglires</taxon>
        <taxon>Primates</taxon>
        <taxon>Haplorrhini</taxon>
        <taxon>Catarrhini</taxon>
        <taxon>Hominidae</taxon>
        <taxon>Homo</taxon>
    </lineage>
</organism>
<evidence type="ECO:0000269" key="1">
    <source>
    </source>
</evidence>
<evidence type="ECO:0000269" key="2">
    <source>
    </source>
</evidence>
<evidence type="ECO:0000269" key="3">
    <source>
    </source>
</evidence>
<evidence type="ECO:0000269" key="4">
    <source>
    </source>
</evidence>
<evidence type="ECO:0000269" key="5">
    <source>
    </source>
</evidence>
<evidence type="ECO:0000303" key="6">
    <source>
    </source>
</evidence>
<evidence type="ECO:0000305" key="7"/>
<evidence type="ECO:0007829" key="8">
    <source>
        <dbReference type="PDB" id="4HOQ"/>
    </source>
</evidence>
<evidence type="ECO:0007829" key="9">
    <source>
        <dbReference type="PDB" id="4HOR"/>
    </source>
</evidence>
<feature type="chain" id="PRO_0000106351" description="Interferon-induced protein with tetratricopeptide repeats 5">
    <location>
        <begin position="1"/>
        <end position="482"/>
    </location>
</feature>
<feature type="repeat" description="TPR 1">
    <location>
        <begin position="51"/>
        <end position="84"/>
    </location>
</feature>
<feature type="repeat" description="TPR 2">
    <location>
        <begin position="94"/>
        <end position="127"/>
    </location>
</feature>
<feature type="repeat" description="TPR 3">
    <location>
        <begin position="138"/>
        <end position="173"/>
    </location>
</feature>
<feature type="repeat" description="TPR 4">
    <location>
        <begin position="181"/>
        <end position="214"/>
    </location>
</feature>
<feature type="repeat" description="TPR 5">
    <location>
        <begin position="249"/>
        <end position="282"/>
    </location>
</feature>
<feature type="repeat" description="TPR 6">
    <location>
        <begin position="338"/>
        <end position="371"/>
    </location>
</feature>
<feature type="repeat" description="TPR 7">
    <location>
        <begin position="376"/>
        <end position="410"/>
    </location>
</feature>
<feature type="repeat" description="TPR 8">
    <location>
        <begin position="435"/>
        <end position="468"/>
    </location>
</feature>
<feature type="region of interest" description="Interaction with the 5'-triphosphate group of PPP-RNA">
    <location>
        <begin position="254"/>
        <end position="260"/>
    </location>
</feature>
<feature type="site" description="Interaction with PPP-RNA">
    <location>
        <position position="33"/>
    </location>
</feature>
<feature type="site" description="Interaction with PPP-RNA">
    <location>
        <position position="37"/>
    </location>
</feature>
<feature type="site" description="Interaction with PPP-RNA">
    <location>
        <position position="41"/>
    </location>
</feature>
<feature type="site" description="Interaction with PPP-RNA">
    <location>
        <position position="150"/>
    </location>
</feature>
<feature type="site" description="Interaction with PPP-RNA">
    <location>
        <position position="186"/>
    </location>
</feature>
<feature type="site" description="Interaction with PPP-RNA">
    <location>
        <position position="250"/>
    </location>
</feature>
<feature type="site" description="Interaction with the 5'-triphosphate group of PPP-RNA">
    <location>
        <position position="288"/>
    </location>
</feature>
<feature type="splice variant" id="VSP_056412" description="In isoform 2." evidence="6">
    <location>
        <begin position="158"/>
        <end position="205"/>
    </location>
</feature>
<feature type="mutagenesis site" description="No effect on RNA-binding but changes size profile of RNA bound. Reduces PPP-RNA-binding." evidence="2 4">
    <original>E</original>
    <variation>A</variation>
    <location>
        <position position="33"/>
    </location>
</feature>
<feature type="mutagenesis site" description="No effect on RNA-binding but changes size profile of RNA bound." evidence="4">
    <original>T</original>
    <variation>A</variation>
    <variation>V</variation>
    <location>
        <position position="37"/>
    </location>
</feature>
<feature type="mutagenesis site" description="Abolishes PPP-RNA-binding.">
    <original>T</original>
    <variation>V</variation>
    <location>
        <position position="37"/>
    </location>
</feature>
<feature type="mutagenesis site" description="No effect on RNA-binding but changes size profile of RNA bound. Abolishes PPP-RNA-binding." evidence="2 4">
    <original>Q</original>
    <variation>E</variation>
    <location>
        <position position="41"/>
    </location>
</feature>
<feature type="mutagenesis site" description="Inhibits RNA-binding." evidence="4">
    <original>K</original>
    <variation>A</variation>
    <variation>E</variation>
    <location>
        <position position="48"/>
    </location>
</feature>
<feature type="mutagenesis site" description="Abolishes PPP-RNA-binding." evidence="2">
    <original>K</original>
    <variation>M</variation>
    <location>
        <position position="150"/>
    </location>
</feature>
<feature type="mutagenesis site" description="Inhibits RNA-binding." evidence="4">
    <original>K</original>
    <variation>N</variation>
    <variation>E</variation>
    <location>
        <position position="150"/>
    </location>
</feature>
<feature type="mutagenesis site" description="Reduces RNA-binding." evidence="4">
    <original>K</original>
    <variation>R</variation>
    <location>
        <position position="150"/>
    </location>
</feature>
<feature type="mutagenesis site" description="No effect on RNA-binding. Reduces PPP-RNA-binding." evidence="2 4">
    <original>Y</original>
    <variation>F</variation>
    <variation>A</variation>
    <location>
        <position position="156"/>
    </location>
</feature>
<feature type="mutagenesis site" description="Reduces binding to RNA and DNA." evidence="3">
    <original>YR</original>
    <variation>AE</variation>
    <location>
        <begin position="185"/>
        <end position="186"/>
    </location>
</feature>
<feature type="mutagenesis site" description="Abolishes RNA-binding." evidence="2 4">
    <original>R</original>
    <variation>H</variation>
    <variation>A</variation>
    <location>
        <position position="186"/>
    </location>
</feature>
<feature type="mutagenesis site" description="No effect on RNA-binding but changes size profile of RNA bound. Abolishes PPP-RNA-binding." evidence="2 4">
    <original>Y</original>
    <variation>F</variation>
    <location>
        <position position="250"/>
    </location>
</feature>
<feature type="mutagenesis site" description="Reduces binding to RNA and DNA." evidence="3">
    <original>RY</original>
    <variation>EA</variation>
    <location>
        <begin position="253"/>
        <end position="254"/>
    </location>
</feature>
<feature type="mutagenesis site" description="Abolishes RNA-binding." evidence="2 4">
    <original>R</original>
    <variation>M</variation>
    <location>
        <position position="253"/>
    </location>
</feature>
<feature type="mutagenesis site" description="Abolishes RNA-binding." evidence="2 4">
    <original>Y</original>
    <variation>F</variation>
    <location>
        <position position="254"/>
    </location>
</feature>
<feature type="mutagenesis site" description="Reduces binding to RNA and DNA." evidence="3">
    <original>K</original>
    <variation>E</variation>
    <location>
        <position position="257"/>
    </location>
</feature>
<feature type="mutagenesis site" description="Abolishes PPP-RNA-binding." evidence="2">
    <original>R</original>
    <variation>E</variation>
    <location>
        <position position="260"/>
    </location>
</feature>
<feature type="mutagenesis site" description="Strongly reduces binding to dsDNA. No effect on ssRNA binding." evidence="3">
    <original>F</original>
    <variation>A</variation>
    <location>
        <position position="284"/>
    </location>
</feature>
<feature type="mutagenesis site" description="Reduces PPP-RNA-binding." evidence="2">
    <original>H</original>
    <variation>A</variation>
    <location>
        <position position="287"/>
    </location>
</feature>
<feature type="mutagenesis site" description="Abolishes RNA-binding." evidence="2 4">
    <original>Q</original>
    <variation>E</variation>
    <location>
        <position position="288"/>
    </location>
</feature>
<feature type="mutagenesis site" description="No effect RNA-binding." evidence="1 4">
    <original>L</original>
    <variation>A</variation>
    <location>
        <position position="291"/>
    </location>
</feature>
<feature type="mutagenesis site" description="Strongly reduces binding to dsDNA. No effect on ssRNA binding." evidence="3">
    <original>R</original>
    <variation>E</variation>
    <location>
        <position position="294"/>
    </location>
</feature>
<feature type="mutagenesis site" description="Reduces RNA-binding." evidence="1">
    <original>K</original>
    <variation>A</variation>
    <location>
        <position position="302"/>
    </location>
</feature>
<feature type="mutagenesis site" description="Reduces RNA-binding. 25 fold reduction in tRNA-binding." evidence="1 4">
    <original>R</original>
    <variation>A</variation>
    <location>
        <position position="307"/>
    </location>
</feature>
<feature type="mutagenesis site" description="Reduces RNA-binding." evidence="1">
    <original>K</original>
    <variation>A</variation>
    <location>
        <position position="309"/>
    </location>
</feature>
<feature type="mutagenesis site" description="No effect on RNA-binding but changes size profile of RNA bound." evidence="4">
    <original>D</original>
    <variation>A</variation>
    <location>
        <position position="334"/>
    </location>
</feature>
<feature type="mutagenesis site" description="Reduces binding to RNA and DNA." evidence="3">
    <original>FAF</original>
    <variation>AAA</variation>
    <location>
        <begin position="337"/>
        <end position="339"/>
    </location>
</feature>
<feature type="mutagenesis site" description="Abolishes PPP-RNA-binding." evidence="2">
    <original>F</original>
    <variation>A</variation>
    <location>
        <position position="337"/>
    </location>
</feature>
<feature type="mutagenesis site" description="Reduces RNA-binding." evidence="4">
    <original>F</original>
    <variation>A</variation>
    <location>
        <position position="339"/>
    </location>
</feature>
<feature type="mutagenesis site" description="Reduces binding to RNA and DNA and impairs antiviral activity; when associated with E-415." evidence="3">
    <original>R</original>
    <variation>E</variation>
    <location>
        <position position="384"/>
    </location>
</feature>
<feature type="mutagenesis site" description="Reduces RNA-binding." evidence="1">
    <original>FH</original>
    <variation>AA</variation>
    <location>
        <begin position="388"/>
        <end position="389"/>
    </location>
</feature>
<feature type="mutagenesis site" description="Reduces RNA-binding. 25 fold reduction in tRNA-binding." evidence="1 4">
    <original>K</original>
    <variation>A</variation>
    <location>
        <position position="415"/>
    </location>
</feature>
<feature type="mutagenesis site" description="Reduces binding to RNA and DNA and impairs antiviral activity; when associated with E-384." evidence="3">
    <original>K</original>
    <variation>E</variation>
    <location>
        <position position="415"/>
    </location>
</feature>
<feature type="mutagenesis site" description="Reduces binding to RNA and DNA." evidence="3">
    <original>KLSTK</original>
    <variation>ELSTE</variation>
    <location>
        <begin position="422"/>
        <end position="426"/>
    </location>
</feature>
<feature type="mutagenesis site" description="Reduced RNA-binding." evidence="1 4">
    <original>K</original>
    <variation>A</variation>
    <location>
        <position position="422"/>
    </location>
</feature>
<feature type="mutagenesis site" description="Reduces RNA-binding. 5 fold reduction in tRNA-binding." evidence="1">
    <original>K</original>
    <variation>A</variation>
    <location>
        <position position="426"/>
    </location>
</feature>
<feature type="sequence conflict" description="In Ref. 3; CAG33312." evidence="7" ref="3">
    <original>S</original>
    <variation>N</variation>
    <location>
        <position position="215"/>
    </location>
</feature>
<feature type="sequence conflict" description="In Ref. 2; BAG35276." evidence="7" ref="2">
    <original>G</original>
    <variation>R</variation>
    <location>
        <position position="449"/>
    </location>
</feature>
<feature type="helix" evidence="9">
    <location>
        <begin position="3"/>
        <end position="15"/>
    </location>
</feature>
<feature type="helix" evidence="9">
    <location>
        <begin position="19"/>
        <end position="21"/>
    </location>
</feature>
<feature type="helix" evidence="9">
    <location>
        <begin position="26"/>
        <end position="28"/>
    </location>
</feature>
<feature type="helix" evidence="9">
    <location>
        <begin position="31"/>
        <end position="44"/>
    </location>
</feature>
<feature type="strand" evidence="8">
    <location>
        <begin position="46"/>
        <end position="48"/>
    </location>
</feature>
<feature type="helix" evidence="9">
    <location>
        <begin position="50"/>
        <end position="63"/>
    </location>
</feature>
<feature type="helix" evidence="9">
    <location>
        <begin position="67"/>
        <end position="84"/>
    </location>
</feature>
<feature type="helix" evidence="9">
    <location>
        <begin position="86"/>
        <end position="88"/>
    </location>
</feature>
<feature type="helix" evidence="9">
    <location>
        <begin position="91"/>
        <end position="93"/>
    </location>
</feature>
<feature type="helix" evidence="9">
    <location>
        <begin position="94"/>
        <end position="106"/>
    </location>
</feature>
<feature type="helix" evidence="9">
    <location>
        <begin position="110"/>
        <end position="126"/>
    </location>
</feature>
<feature type="strand" evidence="9">
    <location>
        <begin position="130"/>
        <end position="133"/>
    </location>
</feature>
<feature type="helix" evidence="9">
    <location>
        <begin position="138"/>
        <end position="150"/>
    </location>
</feature>
<feature type="helix" evidence="9">
    <location>
        <begin position="153"/>
        <end position="155"/>
    </location>
</feature>
<feature type="helix" evidence="9">
    <location>
        <begin position="156"/>
        <end position="169"/>
    </location>
</feature>
<feature type="helix" evidence="9">
    <location>
        <begin position="174"/>
        <end position="189"/>
    </location>
</feature>
<feature type="strand" evidence="9">
    <location>
        <begin position="193"/>
        <end position="195"/>
    </location>
</feature>
<feature type="helix" evidence="9">
    <location>
        <begin position="201"/>
        <end position="210"/>
    </location>
</feature>
<feature type="helix" evidence="9">
    <location>
        <begin position="215"/>
        <end position="227"/>
    </location>
</feature>
<feature type="helix" evidence="9">
    <location>
        <begin position="231"/>
        <end position="244"/>
    </location>
</feature>
<feature type="helix" evidence="9">
    <location>
        <begin position="249"/>
        <end position="261"/>
    </location>
</feature>
<feature type="helix" evidence="9">
    <location>
        <begin position="265"/>
        <end position="278"/>
    </location>
</feature>
<feature type="helix" evidence="9">
    <location>
        <begin position="283"/>
        <end position="303"/>
    </location>
</feature>
<feature type="turn" evidence="9">
    <location>
        <begin position="304"/>
        <end position="306"/>
    </location>
</feature>
<feature type="helix" evidence="9">
    <location>
        <begin position="310"/>
        <end position="333"/>
    </location>
</feature>
<feature type="helix" evidence="9">
    <location>
        <begin position="338"/>
        <end position="350"/>
    </location>
</feature>
<feature type="helix" evidence="9">
    <location>
        <begin position="354"/>
        <end position="365"/>
    </location>
</feature>
<feature type="helix" evidence="9">
    <location>
        <begin position="372"/>
        <end position="388"/>
    </location>
</feature>
<feature type="helix" evidence="9">
    <location>
        <begin position="393"/>
        <end position="406"/>
    </location>
</feature>
<feature type="strand" evidence="9">
    <location>
        <begin position="408"/>
        <end position="410"/>
    </location>
</feature>
<feature type="helix" evidence="9">
    <location>
        <begin position="413"/>
        <end position="430"/>
    </location>
</feature>
<feature type="helix" evidence="9">
    <location>
        <begin position="435"/>
        <end position="447"/>
    </location>
</feature>
<feature type="helix" evidence="9">
    <location>
        <begin position="451"/>
        <end position="464"/>
    </location>
</feature>
<feature type="helix" evidence="9">
    <location>
        <begin position="469"/>
        <end position="480"/>
    </location>
</feature>